<feature type="chain" id="PRO_1000004629" description="Glutamyl-tRNA reductase">
    <location>
        <begin position="1"/>
        <end position="418"/>
    </location>
</feature>
<feature type="active site" description="Nucleophile" evidence="1">
    <location>
        <position position="50"/>
    </location>
</feature>
<feature type="binding site" evidence="1">
    <location>
        <begin position="49"/>
        <end position="52"/>
    </location>
    <ligand>
        <name>substrate</name>
    </ligand>
</feature>
<feature type="binding site" evidence="1">
    <location>
        <position position="109"/>
    </location>
    <ligand>
        <name>substrate</name>
    </ligand>
</feature>
<feature type="binding site" evidence="1">
    <location>
        <begin position="114"/>
        <end position="116"/>
    </location>
    <ligand>
        <name>substrate</name>
    </ligand>
</feature>
<feature type="binding site" evidence="1">
    <location>
        <position position="120"/>
    </location>
    <ligand>
        <name>substrate</name>
    </ligand>
</feature>
<feature type="binding site" evidence="1">
    <location>
        <begin position="189"/>
        <end position="194"/>
    </location>
    <ligand>
        <name>NADP(+)</name>
        <dbReference type="ChEBI" id="CHEBI:58349"/>
    </ligand>
</feature>
<feature type="site" description="Important for activity" evidence="1">
    <location>
        <position position="99"/>
    </location>
</feature>
<organism>
    <name type="scientific">Klebsiella pneumoniae subsp. pneumoniae (strain ATCC 700721 / MGH 78578)</name>
    <dbReference type="NCBI Taxonomy" id="272620"/>
    <lineage>
        <taxon>Bacteria</taxon>
        <taxon>Pseudomonadati</taxon>
        <taxon>Pseudomonadota</taxon>
        <taxon>Gammaproteobacteria</taxon>
        <taxon>Enterobacterales</taxon>
        <taxon>Enterobacteriaceae</taxon>
        <taxon>Klebsiella/Raoultella group</taxon>
        <taxon>Klebsiella</taxon>
        <taxon>Klebsiella pneumoniae complex</taxon>
    </lineage>
</organism>
<protein>
    <recommendedName>
        <fullName evidence="1">Glutamyl-tRNA reductase</fullName>
        <shortName evidence="1">GluTR</shortName>
        <ecNumber evidence="1">1.2.1.70</ecNumber>
    </recommendedName>
</protein>
<evidence type="ECO:0000255" key="1">
    <source>
        <dbReference type="HAMAP-Rule" id="MF_00087"/>
    </source>
</evidence>
<gene>
    <name evidence="1" type="primary">hemA</name>
    <name type="ordered locus">KPN78578_22000</name>
    <name type="ORF">KPN_02235</name>
</gene>
<dbReference type="EC" id="1.2.1.70" evidence="1"/>
<dbReference type="EMBL" id="CP000647">
    <property type="protein sequence ID" value="ABR77661.1"/>
    <property type="molecule type" value="Genomic_DNA"/>
</dbReference>
<dbReference type="RefSeq" id="WP_002910404.1">
    <property type="nucleotide sequence ID" value="NC_009648.1"/>
</dbReference>
<dbReference type="SMR" id="A6TAP0"/>
<dbReference type="STRING" id="272620.KPN_02235"/>
<dbReference type="PaxDb" id="272620-KPN_02235"/>
<dbReference type="EnsemblBacteria" id="ABR77661">
    <property type="protein sequence ID" value="ABR77661"/>
    <property type="gene ID" value="KPN_02235"/>
</dbReference>
<dbReference type="GeneID" id="69754761"/>
<dbReference type="KEGG" id="kpn:KPN_02235"/>
<dbReference type="HOGENOM" id="CLU_035113_2_2_6"/>
<dbReference type="UniPathway" id="UPA00251">
    <property type="reaction ID" value="UER00316"/>
</dbReference>
<dbReference type="Proteomes" id="UP000000265">
    <property type="component" value="Chromosome"/>
</dbReference>
<dbReference type="GO" id="GO:0008883">
    <property type="term" value="F:glutamyl-tRNA reductase activity"/>
    <property type="evidence" value="ECO:0007669"/>
    <property type="project" value="UniProtKB-UniRule"/>
</dbReference>
<dbReference type="GO" id="GO:0050661">
    <property type="term" value="F:NADP binding"/>
    <property type="evidence" value="ECO:0007669"/>
    <property type="project" value="InterPro"/>
</dbReference>
<dbReference type="GO" id="GO:0019353">
    <property type="term" value="P:protoporphyrinogen IX biosynthetic process from glutamate"/>
    <property type="evidence" value="ECO:0007669"/>
    <property type="project" value="TreeGrafter"/>
</dbReference>
<dbReference type="CDD" id="cd05213">
    <property type="entry name" value="NAD_bind_Glutamyl_tRNA_reduct"/>
    <property type="match status" value="1"/>
</dbReference>
<dbReference type="FunFam" id="3.30.460.30:FF:000001">
    <property type="entry name" value="Glutamyl-tRNA reductase"/>
    <property type="match status" value="1"/>
</dbReference>
<dbReference type="FunFam" id="3.40.50.720:FF:000031">
    <property type="entry name" value="Glutamyl-tRNA reductase"/>
    <property type="match status" value="1"/>
</dbReference>
<dbReference type="Gene3D" id="3.30.460.30">
    <property type="entry name" value="Glutamyl-tRNA reductase, N-terminal domain"/>
    <property type="match status" value="1"/>
</dbReference>
<dbReference type="Gene3D" id="3.40.50.720">
    <property type="entry name" value="NAD(P)-binding Rossmann-like Domain"/>
    <property type="match status" value="1"/>
</dbReference>
<dbReference type="HAMAP" id="MF_00087">
    <property type="entry name" value="Glu_tRNA_reductase"/>
    <property type="match status" value="1"/>
</dbReference>
<dbReference type="InterPro" id="IPR000343">
    <property type="entry name" value="4pyrrol_synth_GluRdtase"/>
</dbReference>
<dbReference type="InterPro" id="IPR015896">
    <property type="entry name" value="4pyrrol_synth_GluRdtase_dimer"/>
</dbReference>
<dbReference type="InterPro" id="IPR015895">
    <property type="entry name" value="4pyrrol_synth_GluRdtase_N"/>
</dbReference>
<dbReference type="InterPro" id="IPR018214">
    <property type="entry name" value="GluRdtase_CS"/>
</dbReference>
<dbReference type="InterPro" id="IPR036453">
    <property type="entry name" value="GluRdtase_dimer_dom_sf"/>
</dbReference>
<dbReference type="InterPro" id="IPR036343">
    <property type="entry name" value="GluRdtase_N_sf"/>
</dbReference>
<dbReference type="InterPro" id="IPR036291">
    <property type="entry name" value="NAD(P)-bd_dom_sf"/>
</dbReference>
<dbReference type="InterPro" id="IPR006151">
    <property type="entry name" value="Shikm_DH/Glu-tRNA_Rdtase"/>
</dbReference>
<dbReference type="NCBIfam" id="TIGR01035">
    <property type="entry name" value="hemA"/>
    <property type="match status" value="1"/>
</dbReference>
<dbReference type="PANTHER" id="PTHR43013">
    <property type="entry name" value="GLUTAMYL-TRNA REDUCTASE"/>
    <property type="match status" value="1"/>
</dbReference>
<dbReference type="PANTHER" id="PTHR43013:SF1">
    <property type="entry name" value="GLUTAMYL-TRNA REDUCTASE"/>
    <property type="match status" value="1"/>
</dbReference>
<dbReference type="Pfam" id="PF00745">
    <property type="entry name" value="GlutR_dimer"/>
    <property type="match status" value="1"/>
</dbReference>
<dbReference type="Pfam" id="PF05201">
    <property type="entry name" value="GlutR_N"/>
    <property type="match status" value="1"/>
</dbReference>
<dbReference type="Pfam" id="PF01488">
    <property type="entry name" value="Shikimate_DH"/>
    <property type="match status" value="1"/>
</dbReference>
<dbReference type="PIRSF" id="PIRSF000445">
    <property type="entry name" value="4pyrrol_synth_GluRdtase"/>
    <property type="match status" value="1"/>
</dbReference>
<dbReference type="SUPFAM" id="SSF69742">
    <property type="entry name" value="Glutamyl tRNA-reductase catalytic, N-terminal domain"/>
    <property type="match status" value="1"/>
</dbReference>
<dbReference type="SUPFAM" id="SSF69075">
    <property type="entry name" value="Glutamyl tRNA-reductase dimerization domain"/>
    <property type="match status" value="1"/>
</dbReference>
<dbReference type="SUPFAM" id="SSF51735">
    <property type="entry name" value="NAD(P)-binding Rossmann-fold domains"/>
    <property type="match status" value="1"/>
</dbReference>
<dbReference type="PROSITE" id="PS00747">
    <property type="entry name" value="GLUTR"/>
    <property type="match status" value="1"/>
</dbReference>
<proteinExistence type="inferred from homology"/>
<keyword id="KW-0521">NADP</keyword>
<keyword id="KW-0560">Oxidoreductase</keyword>
<keyword id="KW-0627">Porphyrin biosynthesis</keyword>
<comment type="function">
    <text evidence="1">Catalyzes the NADPH-dependent reduction of glutamyl-tRNA(Glu) to glutamate 1-semialdehyde (GSA).</text>
</comment>
<comment type="catalytic activity">
    <reaction evidence="1">
        <text>(S)-4-amino-5-oxopentanoate + tRNA(Glu) + NADP(+) = L-glutamyl-tRNA(Glu) + NADPH + H(+)</text>
        <dbReference type="Rhea" id="RHEA:12344"/>
        <dbReference type="Rhea" id="RHEA-COMP:9663"/>
        <dbReference type="Rhea" id="RHEA-COMP:9680"/>
        <dbReference type="ChEBI" id="CHEBI:15378"/>
        <dbReference type="ChEBI" id="CHEBI:57501"/>
        <dbReference type="ChEBI" id="CHEBI:57783"/>
        <dbReference type="ChEBI" id="CHEBI:58349"/>
        <dbReference type="ChEBI" id="CHEBI:78442"/>
        <dbReference type="ChEBI" id="CHEBI:78520"/>
        <dbReference type="EC" id="1.2.1.70"/>
    </reaction>
</comment>
<comment type="pathway">
    <text evidence="1">Porphyrin-containing compound metabolism; protoporphyrin-IX biosynthesis; 5-aminolevulinate from L-glutamyl-tRNA(Glu): step 1/2.</text>
</comment>
<comment type="subunit">
    <text evidence="1">Homodimer.</text>
</comment>
<comment type="domain">
    <text evidence="1">Possesses an unusual extended V-shaped dimeric structure with each monomer consisting of three distinct domains arranged along a curved 'spinal' alpha-helix. The N-terminal catalytic domain specifically recognizes the glutamate moiety of the substrate. The second domain is the NADPH-binding domain, and the third C-terminal domain is responsible for dimerization.</text>
</comment>
<comment type="miscellaneous">
    <text evidence="1">During catalysis, the active site Cys acts as a nucleophile attacking the alpha-carbonyl group of tRNA-bound glutamate with the formation of a thioester intermediate between enzyme and glutamate, and the concomitant release of tRNA(Glu). The thioester intermediate is finally reduced by direct hydride transfer from NADPH, to form the product GSA.</text>
</comment>
<comment type="similarity">
    <text evidence="1">Belongs to the glutamyl-tRNA reductase family.</text>
</comment>
<accession>A6TAP0</accession>
<reference key="1">
    <citation type="submission" date="2006-09" db="EMBL/GenBank/DDBJ databases">
        <authorList>
            <consortium name="The Klebsiella pneumonia Genome Sequencing Project"/>
            <person name="McClelland M."/>
            <person name="Sanderson E.K."/>
            <person name="Spieth J."/>
            <person name="Clifton W.S."/>
            <person name="Latreille P."/>
            <person name="Sabo A."/>
            <person name="Pepin K."/>
            <person name="Bhonagiri V."/>
            <person name="Porwollik S."/>
            <person name="Ali J."/>
            <person name="Wilson R.K."/>
        </authorList>
    </citation>
    <scope>NUCLEOTIDE SEQUENCE [LARGE SCALE GENOMIC DNA]</scope>
    <source>
        <strain>ATCC 700721 / MGH 78578</strain>
    </source>
</reference>
<sequence>MTLLALGINHKTAPVALRERVTFSPETLDKALESLLAQPMVQGGVVLSTCNRTELYLSVEEQDNLQEALIRWLCNYHGLNEEDLRKSLYWHQDNDAVSHLMRVASGLDSLVLGEPQILGQVKKAFADSSRGHLNVSELERMFQKSFSVAKRVRTETDIGASAVSVAFAACTLARQIFESLSSVTVLLVGAGETIELVARHLREHHVRKMVIANRTRERAQALAEEVGAEVIALSDIDERLKEADIIISSTASPLPIIGKGMVERALKARRNQPMLLVDIAVPRDVEPEVGKLANAYLYSVDDLQNIIQHNLAQRKAAAVQAESIVEQETSEFMAWLRAQSASETIREYRSQSEQVREELTAKALAALEQGGDAQEIMQDLARKLTNRLIHAPTKSLQQAARDGDDERLHILRNSLGLE</sequence>
<name>HEM1_KLEP7</name>